<gene>
    <name evidence="1" type="primary">tmk</name>
    <name type="ordered locus">Hhal_0006</name>
</gene>
<feature type="chain" id="PRO_1000071558" description="Thymidylate kinase">
    <location>
        <begin position="1"/>
        <end position="215"/>
    </location>
</feature>
<feature type="binding site" evidence="1">
    <location>
        <begin position="12"/>
        <end position="19"/>
    </location>
    <ligand>
        <name>ATP</name>
        <dbReference type="ChEBI" id="CHEBI:30616"/>
    </ligand>
</feature>
<sequence>MTERGCFITVEGLEGAGKTTCLQAIEQMLLEAGIDRPLFTREPGGTPFGEALRGALLDPQYRGLTAEAEALTVFAARAEHLAQVIRPTLDAGRWVISDRFTDATYAYQGGGRGLGDERIAVLERWVHGGFTPDRTLLLDVDPTVGRSRVAHRGDGEDRFEQERDPFFQAARAAYARRAAADPERFRCIDANRPEGEVAEQVRAGVADLLPVGGRP</sequence>
<accession>A1WSY9</accession>
<name>KTHY_HALHL</name>
<organism>
    <name type="scientific">Halorhodospira halophila (strain DSM 244 / SL1)</name>
    <name type="common">Ectothiorhodospira halophila (strain DSM 244 / SL1)</name>
    <dbReference type="NCBI Taxonomy" id="349124"/>
    <lineage>
        <taxon>Bacteria</taxon>
        <taxon>Pseudomonadati</taxon>
        <taxon>Pseudomonadota</taxon>
        <taxon>Gammaproteobacteria</taxon>
        <taxon>Chromatiales</taxon>
        <taxon>Ectothiorhodospiraceae</taxon>
        <taxon>Halorhodospira</taxon>
    </lineage>
</organism>
<comment type="function">
    <text evidence="1">Phosphorylation of dTMP to form dTDP in both de novo and salvage pathways of dTTP synthesis.</text>
</comment>
<comment type="catalytic activity">
    <reaction evidence="1">
        <text>dTMP + ATP = dTDP + ADP</text>
        <dbReference type="Rhea" id="RHEA:13517"/>
        <dbReference type="ChEBI" id="CHEBI:30616"/>
        <dbReference type="ChEBI" id="CHEBI:58369"/>
        <dbReference type="ChEBI" id="CHEBI:63528"/>
        <dbReference type="ChEBI" id="CHEBI:456216"/>
        <dbReference type="EC" id="2.7.4.9"/>
    </reaction>
</comment>
<comment type="similarity">
    <text evidence="1">Belongs to the thymidylate kinase family.</text>
</comment>
<protein>
    <recommendedName>
        <fullName evidence="1">Thymidylate kinase</fullName>
        <ecNumber evidence="1">2.7.4.9</ecNumber>
    </recommendedName>
    <alternativeName>
        <fullName evidence="1">dTMP kinase</fullName>
    </alternativeName>
</protein>
<keyword id="KW-0067">ATP-binding</keyword>
<keyword id="KW-0418">Kinase</keyword>
<keyword id="KW-0545">Nucleotide biosynthesis</keyword>
<keyword id="KW-0547">Nucleotide-binding</keyword>
<keyword id="KW-1185">Reference proteome</keyword>
<keyword id="KW-0808">Transferase</keyword>
<proteinExistence type="inferred from homology"/>
<evidence type="ECO:0000255" key="1">
    <source>
        <dbReference type="HAMAP-Rule" id="MF_00165"/>
    </source>
</evidence>
<dbReference type="EC" id="2.7.4.9" evidence="1"/>
<dbReference type="EMBL" id="CP000544">
    <property type="protein sequence ID" value="ABM60801.1"/>
    <property type="molecule type" value="Genomic_DNA"/>
</dbReference>
<dbReference type="RefSeq" id="WP_011812824.1">
    <property type="nucleotide sequence ID" value="NC_008789.1"/>
</dbReference>
<dbReference type="SMR" id="A1WSY9"/>
<dbReference type="STRING" id="349124.Hhal_0006"/>
<dbReference type="KEGG" id="hha:Hhal_0006"/>
<dbReference type="eggNOG" id="COG0125">
    <property type="taxonomic scope" value="Bacteria"/>
</dbReference>
<dbReference type="HOGENOM" id="CLU_049131_0_2_6"/>
<dbReference type="OrthoDB" id="9774907at2"/>
<dbReference type="Proteomes" id="UP000000647">
    <property type="component" value="Chromosome"/>
</dbReference>
<dbReference type="GO" id="GO:0005829">
    <property type="term" value="C:cytosol"/>
    <property type="evidence" value="ECO:0007669"/>
    <property type="project" value="TreeGrafter"/>
</dbReference>
<dbReference type="GO" id="GO:0005524">
    <property type="term" value="F:ATP binding"/>
    <property type="evidence" value="ECO:0007669"/>
    <property type="project" value="UniProtKB-UniRule"/>
</dbReference>
<dbReference type="GO" id="GO:0004798">
    <property type="term" value="F:dTMP kinase activity"/>
    <property type="evidence" value="ECO:0007669"/>
    <property type="project" value="UniProtKB-UniRule"/>
</dbReference>
<dbReference type="GO" id="GO:0006233">
    <property type="term" value="P:dTDP biosynthetic process"/>
    <property type="evidence" value="ECO:0007669"/>
    <property type="project" value="InterPro"/>
</dbReference>
<dbReference type="GO" id="GO:0006235">
    <property type="term" value="P:dTTP biosynthetic process"/>
    <property type="evidence" value="ECO:0007669"/>
    <property type="project" value="UniProtKB-UniRule"/>
</dbReference>
<dbReference type="GO" id="GO:0006227">
    <property type="term" value="P:dUDP biosynthetic process"/>
    <property type="evidence" value="ECO:0007669"/>
    <property type="project" value="TreeGrafter"/>
</dbReference>
<dbReference type="CDD" id="cd01672">
    <property type="entry name" value="TMPK"/>
    <property type="match status" value="1"/>
</dbReference>
<dbReference type="FunFam" id="3.40.50.300:FF:000225">
    <property type="entry name" value="Thymidylate kinase"/>
    <property type="match status" value="1"/>
</dbReference>
<dbReference type="Gene3D" id="3.40.50.300">
    <property type="entry name" value="P-loop containing nucleotide triphosphate hydrolases"/>
    <property type="match status" value="1"/>
</dbReference>
<dbReference type="HAMAP" id="MF_00165">
    <property type="entry name" value="Thymidylate_kinase"/>
    <property type="match status" value="1"/>
</dbReference>
<dbReference type="InterPro" id="IPR027417">
    <property type="entry name" value="P-loop_NTPase"/>
</dbReference>
<dbReference type="InterPro" id="IPR039430">
    <property type="entry name" value="Thymidylate_kin-like_dom"/>
</dbReference>
<dbReference type="InterPro" id="IPR018094">
    <property type="entry name" value="Thymidylate_kinase"/>
</dbReference>
<dbReference type="NCBIfam" id="TIGR00041">
    <property type="entry name" value="DTMP_kinase"/>
    <property type="match status" value="1"/>
</dbReference>
<dbReference type="PANTHER" id="PTHR10344">
    <property type="entry name" value="THYMIDYLATE KINASE"/>
    <property type="match status" value="1"/>
</dbReference>
<dbReference type="PANTHER" id="PTHR10344:SF4">
    <property type="entry name" value="UMP-CMP KINASE 2, MITOCHONDRIAL"/>
    <property type="match status" value="1"/>
</dbReference>
<dbReference type="Pfam" id="PF02223">
    <property type="entry name" value="Thymidylate_kin"/>
    <property type="match status" value="1"/>
</dbReference>
<dbReference type="SUPFAM" id="SSF52540">
    <property type="entry name" value="P-loop containing nucleoside triphosphate hydrolases"/>
    <property type="match status" value="1"/>
</dbReference>
<reference key="1">
    <citation type="submission" date="2006-12" db="EMBL/GenBank/DDBJ databases">
        <title>Complete sequence of Halorhodospira halophila SL1.</title>
        <authorList>
            <consortium name="US DOE Joint Genome Institute"/>
            <person name="Copeland A."/>
            <person name="Lucas S."/>
            <person name="Lapidus A."/>
            <person name="Barry K."/>
            <person name="Detter J.C."/>
            <person name="Glavina del Rio T."/>
            <person name="Hammon N."/>
            <person name="Israni S."/>
            <person name="Dalin E."/>
            <person name="Tice H."/>
            <person name="Pitluck S."/>
            <person name="Saunders E."/>
            <person name="Brettin T."/>
            <person name="Bruce D."/>
            <person name="Han C."/>
            <person name="Tapia R."/>
            <person name="Schmutz J."/>
            <person name="Larimer F."/>
            <person name="Land M."/>
            <person name="Hauser L."/>
            <person name="Kyrpides N."/>
            <person name="Mikhailova N."/>
            <person name="Hoff W."/>
            <person name="Richardson P."/>
        </authorList>
    </citation>
    <scope>NUCLEOTIDE SEQUENCE [LARGE SCALE GENOMIC DNA]</scope>
    <source>
        <strain>DSM 244 / SL1</strain>
    </source>
</reference>